<reference key="1">
    <citation type="journal article" date="1997" name="Science">
        <title>The complete genome sequence of Escherichia coli K-12.</title>
        <authorList>
            <person name="Blattner F.R."/>
            <person name="Plunkett G. III"/>
            <person name="Bloch C.A."/>
            <person name="Perna N.T."/>
            <person name="Burland V."/>
            <person name="Riley M."/>
            <person name="Collado-Vides J."/>
            <person name="Glasner J.D."/>
            <person name="Rode C.K."/>
            <person name="Mayhew G.F."/>
            <person name="Gregor J."/>
            <person name="Davis N.W."/>
            <person name="Kirkpatrick H.A."/>
            <person name="Goeden M.A."/>
            <person name="Rose D.J."/>
            <person name="Mau B."/>
            <person name="Shao Y."/>
        </authorList>
    </citation>
    <scope>NUCLEOTIDE SEQUENCE [LARGE SCALE GENOMIC DNA]</scope>
    <source>
        <strain>K12 / MG1655 / ATCC 47076</strain>
    </source>
</reference>
<reference key="2">
    <citation type="journal article" date="2006" name="Mol. Syst. Biol.">
        <title>Highly accurate genome sequences of Escherichia coli K-12 strains MG1655 and W3110.</title>
        <authorList>
            <person name="Hayashi K."/>
            <person name="Morooka N."/>
            <person name="Yamamoto Y."/>
            <person name="Fujita K."/>
            <person name="Isono K."/>
            <person name="Choi S."/>
            <person name="Ohtsubo E."/>
            <person name="Baba T."/>
            <person name="Wanner B.L."/>
            <person name="Mori H."/>
            <person name="Horiuchi T."/>
        </authorList>
    </citation>
    <scope>NUCLEOTIDE SEQUENCE [LARGE SCALE GENOMIC DNA]</scope>
    <source>
        <strain>K12 / W3110 / ATCC 27325 / DSM 5911</strain>
    </source>
</reference>
<reference key="3">
    <citation type="journal article" date="2005" name="Science">
        <title>Global topology analysis of the Escherichia coli inner membrane proteome.</title>
        <authorList>
            <person name="Daley D.O."/>
            <person name="Rapp M."/>
            <person name="Granseth E."/>
            <person name="Melen K."/>
            <person name="Drew D."/>
            <person name="von Heijne G."/>
        </authorList>
    </citation>
    <scope>TOPOLOGY [LARGE SCALE ANALYSIS]</scope>
    <source>
        <strain>K12 / MG1655 / ATCC 47076</strain>
    </source>
</reference>
<organism>
    <name type="scientific">Escherichia coli (strain K12)</name>
    <dbReference type="NCBI Taxonomy" id="83333"/>
    <lineage>
        <taxon>Bacteria</taxon>
        <taxon>Pseudomonadati</taxon>
        <taxon>Pseudomonadota</taxon>
        <taxon>Gammaproteobacteria</taxon>
        <taxon>Enterobacterales</taxon>
        <taxon>Enterobacteriaceae</taxon>
        <taxon>Escherichia</taxon>
    </lineage>
</organism>
<dbReference type="EMBL" id="U00096">
    <property type="protein sequence ID" value="AAC74529.1"/>
    <property type="molecule type" value="Genomic_DNA"/>
</dbReference>
<dbReference type="EMBL" id="AP009048">
    <property type="protein sequence ID" value="BAE76443.1"/>
    <property type="molecule type" value="Genomic_DNA"/>
</dbReference>
<dbReference type="PIR" id="B64897">
    <property type="entry name" value="B64897"/>
</dbReference>
<dbReference type="RefSeq" id="NP_415964.1">
    <property type="nucleotide sequence ID" value="NC_000913.3"/>
</dbReference>
<dbReference type="RefSeq" id="WP_001076535.1">
    <property type="nucleotide sequence ID" value="NZ_STEB01000043.1"/>
</dbReference>
<dbReference type="DIP" id="DIP-11659N"/>
<dbReference type="FunCoup" id="P76111">
    <property type="interactions" value="165"/>
</dbReference>
<dbReference type="IntAct" id="P76111">
    <property type="interactions" value="1"/>
</dbReference>
<dbReference type="STRING" id="511145.b1447"/>
<dbReference type="TCDB" id="2.A.7.21.2">
    <property type="family name" value="the drug/metabolite transporter (dmt) superfamily"/>
</dbReference>
<dbReference type="PaxDb" id="511145-b1447"/>
<dbReference type="EnsemblBacteria" id="AAC74529">
    <property type="protein sequence ID" value="AAC74529"/>
    <property type="gene ID" value="b1447"/>
</dbReference>
<dbReference type="GeneID" id="946008"/>
<dbReference type="KEGG" id="ecj:JW1442"/>
<dbReference type="KEGG" id="eco:b1447"/>
<dbReference type="KEGG" id="ecoc:C3026_08420"/>
<dbReference type="PATRIC" id="fig|1411691.4.peg.821"/>
<dbReference type="EchoBASE" id="EB3532"/>
<dbReference type="eggNOG" id="COG3238">
    <property type="taxonomic scope" value="Bacteria"/>
</dbReference>
<dbReference type="HOGENOM" id="CLU_111581_0_0_6"/>
<dbReference type="InParanoid" id="P76111"/>
<dbReference type="OMA" id="MLMVRIT"/>
<dbReference type="OrthoDB" id="6594527at2"/>
<dbReference type="PhylomeDB" id="P76111"/>
<dbReference type="BioCyc" id="EcoCyc:G6758-MONOMER"/>
<dbReference type="PRO" id="PR:P76111"/>
<dbReference type="Proteomes" id="UP000000625">
    <property type="component" value="Chromosome"/>
</dbReference>
<dbReference type="GO" id="GO:0005886">
    <property type="term" value="C:plasma membrane"/>
    <property type="evidence" value="ECO:0000314"/>
    <property type="project" value="EcoCyc"/>
</dbReference>
<dbReference type="GO" id="GO:0071978">
    <property type="term" value="P:bacterial-type flagellum-dependent swarming motility"/>
    <property type="evidence" value="ECO:0000315"/>
    <property type="project" value="EcoCyc"/>
</dbReference>
<dbReference type="GO" id="GO:0098659">
    <property type="term" value="P:inorganic cation import across plasma membrane"/>
    <property type="evidence" value="ECO:0000315"/>
    <property type="project" value="EcoCyc"/>
</dbReference>
<dbReference type="InterPro" id="IPR006750">
    <property type="entry name" value="YdcZ"/>
</dbReference>
<dbReference type="PANTHER" id="PTHR34821">
    <property type="entry name" value="INNER MEMBRANE PROTEIN YDCZ"/>
    <property type="match status" value="1"/>
</dbReference>
<dbReference type="PANTHER" id="PTHR34821:SF2">
    <property type="entry name" value="INNER MEMBRANE PROTEIN YDCZ"/>
    <property type="match status" value="1"/>
</dbReference>
<dbReference type="Pfam" id="PF04657">
    <property type="entry name" value="DMT_YdcZ"/>
    <property type="match status" value="1"/>
</dbReference>
<protein>
    <recommendedName>
        <fullName>Inner membrane protein YdcZ</fullName>
    </recommendedName>
</protein>
<sequence>MNQSLTLAFLIAAGIGLVVQNTLMVRITQTSSTILIAMLLNSLVGIVLFVSILWFKQGMAGFGELVSSVRWWTLIPGLLGSFFVFASISGYQNVGAATTIAVLVASQLIGGLMLDIFRSHGVPLRALFGPICGAILLVVGAWLVARRSF</sequence>
<comment type="interaction">
    <interactant intactId="EBI-550492">
        <id>P76111</id>
    </interactant>
    <interactant intactId="EBI-550480">
        <id>P00363</id>
        <label>frdA</label>
    </interactant>
    <organismsDiffer>false</organismsDiffer>
    <experiments>2</experiments>
</comment>
<comment type="subcellular location">
    <subcellularLocation>
        <location>Cell inner membrane</location>
        <topology>Multi-pass membrane protein</topology>
    </subcellularLocation>
</comment>
<keyword id="KW-0997">Cell inner membrane</keyword>
<keyword id="KW-1003">Cell membrane</keyword>
<keyword id="KW-0472">Membrane</keyword>
<keyword id="KW-1185">Reference proteome</keyword>
<keyword id="KW-0812">Transmembrane</keyword>
<keyword id="KW-1133">Transmembrane helix</keyword>
<name>YDCZ_ECOLI</name>
<evidence type="ECO:0000255" key="1"/>
<gene>
    <name type="primary">ydcZ</name>
    <name type="ordered locus">b1447</name>
    <name type="ordered locus">JW1442</name>
</gene>
<feature type="chain" id="PRO_0000168939" description="Inner membrane protein YdcZ">
    <location>
        <begin position="1"/>
        <end position="149"/>
    </location>
</feature>
<feature type="topological domain" description="Periplasmic" evidence="1">
    <location>
        <begin position="1"/>
        <end position="4"/>
    </location>
</feature>
<feature type="transmembrane region" description="Helical" evidence="1">
    <location>
        <begin position="5"/>
        <end position="25"/>
    </location>
</feature>
<feature type="topological domain" description="Cytoplasmic" evidence="1">
    <location>
        <begin position="26"/>
        <end position="33"/>
    </location>
</feature>
<feature type="transmembrane region" description="Helical" evidence="1">
    <location>
        <begin position="34"/>
        <end position="54"/>
    </location>
</feature>
<feature type="topological domain" description="Periplasmic" evidence="1">
    <location>
        <begin position="55"/>
        <end position="70"/>
    </location>
</feature>
<feature type="transmembrane region" description="Helical" evidence="1">
    <location>
        <begin position="71"/>
        <end position="91"/>
    </location>
</feature>
<feature type="topological domain" description="Cytoplasmic" evidence="1">
    <location>
        <begin position="92"/>
        <end position="93"/>
    </location>
</feature>
<feature type="transmembrane region" description="Helical" evidence="1">
    <location>
        <begin position="94"/>
        <end position="114"/>
    </location>
</feature>
<feature type="topological domain" description="Periplasmic" evidence="1">
    <location>
        <begin position="115"/>
        <end position="123"/>
    </location>
</feature>
<feature type="transmembrane region" description="Helical" evidence="1">
    <location>
        <begin position="124"/>
        <end position="144"/>
    </location>
</feature>
<feature type="topological domain" description="Cytoplasmic" evidence="1">
    <location>
        <begin position="145"/>
        <end position="149"/>
    </location>
</feature>
<accession>P76111</accession>
<accession>Q2MBB3</accession>
<proteinExistence type="evidence at protein level"/>